<protein>
    <recommendedName>
        <fullName evidence="1">Phosphoenolpyruvate carboxykinase (ATP)</fullName>
        <shortName evidence="1">PCK</shortName>
        <shortName evidence="1">PEP carboxykinase</shortName>
        <shortName evidence="1">PEPCK</shortName>
        <ecNumber evidence="1">4.1.1.49</ecNumber>
    </recommendedName>
</protein>
<feature type="chain" id="PRO_0000203806" description="Phosphoenolpyruvate carboxykinase (ATP)">
    <location>
        <begin position="1"/>
        <end position="535"/>
    </location>
</feature>
<feature type="binding site" evidence="1">
    <location>
        <position position="59"/>
    </location>
    <ligand>
        <name>substrate</name>
    </ligand>
</feature>
<feature type="binding site" evidence="1">
    <location>
        <position position="201"/>
    </location>
    <ligand>
        <name>substrate</name>
    </ligand>
</feature>
<feature type="binding site" evidence="1">
    <location>
        <position position="207"/>
    </location>
    <ligand>
        <name>ATP</name>
        <dbReference type="ChEBI" id="CHEBI:30616"/>
    </ligand>
</feature>
<feature type="binding site" evidence="1">
    <location>
        <position position="207"/>
    </location>
    <ligand>
        <name>Mn(2+)</name>
        <dbReference type="ChEBI" id="CHEBI:29035"/>
    </ligand>
</feature>
<feature type="binding site" evidence="1">
    <location>
        <position position="207"/>
    </location>
    <ligand>
        <name>substrate</name>
    </ligand>
</feature>
<feature type="binding site" evidence="1">
    <location>
        <position position="226"/>
    </location>
    <ligand>
        <name>ATP</name>
        <dbReference type="ChEBI" id="CHEBI:30616"/>
    </ligand>
</feature>
<feature type="binding site" evidence="1">
    <location>
        <position position="226"/>
    </location>
    <ligand>
        <name>Mn(2+)</name>
        <dbReference type="ChEBI" id="CHEBI:29035"/>
    </ligand>
</feature>
<feature type="binding site" evidence="1">
    <location>
        <begin position="243"/>
        <end position="251"/>
    </location>
    <ligand>
        <name>ATP</name>
        <dbReference type="ChEBI" id="CHEBI:30616"/>
    </ligand>
</feature>
<feature type="binding site" evidence="1">
    <location>
        <position position="264"/>
    </location>
    <ligand>
        <name>Mn(2+)</name>
        <dbReference type="ChEBI" id="CHEBI:29035"/>
    </ligand>
</feature>
<feature type="binding site" evidence="1">
    <location>
        <position position="292"/>
    </location>
    <ligand>
        <name>ATP</name>
        <dbReference type="ChEBI" id="CHEBI:30616"/>
    </ligand>
</feature>
<feature type="binding site" evidence="1">
    <location>
        <position position="328"/>
    </location>
    <ligand>
        <name>ATP</name>
        <dbReference type="ChEBI" id="CHEBI:30616"/>
    </ligand>
</feature>
<feature type="binding site" evidence="1">
    <location>
        <position position="328"/>
    </location>
    <ligand>
        <name>substrate</name>
    </ligand>
</feature>
<feature type="binding site" evidence="1">
    <location>
        <begin position="444"/>
        <end position="445"/>
    </location>
    <ligand>
        <name>ATP</name>
        <dbReference type="ChEBI" id="CHEBI:30616"/>
    </ligand>
</feature>
<feature type="binding site" evidence="1">
    <location>
        <position position="450"/>
    </location>
    <ligand>
        <name>ATP</name>
        <dbReference type="ChEBI" id="CHEBI:30616"/>
    </ligand>
</feature>
<proteinExistence type="inferred from homology"/>
<keyword id="KW-0067">ATP-binding</keyword>
<keyword id="KW-0963">Cytoplasm</keyword>
<keyword id="KW-0210">Decarboxylase</keyword>
<keyword id="KW-0312">Gluconeogenesis</keyword>
<keyword id="KW-0456">Lyase</keyword>
<keyword id="KW-0464">Manganese</keyword>
<keyword id="KW-0479">Metal-binding</keyword>
<keyword id="KW-0547">Nucleotide-binding</keyword>
<accession>Q64MV4</accession>
<sequence length="535" mass="59028">MANLDLSKYGITGVTEILHNPSYDVLFAEETKPGLEGFEKGQVTELGAVNVMTGVYTGRSPKDKFFVKNEASENSVWWTSEEYKNDNKPCSEEAWADLKAKAVKELSNKRLFVVDTFCGANEGTRMKVRFIMEVAWQAHFVTNMFIRPTAEELANYGEPDFVCFNASKAKVDNYKELGLNSETATVFNLKTKEQVILNTWYGGEMKKGMFSIMNYMNPLRGIASMHCSANTDMEGTSSAIFFGLSGTGKTTLSTDPKRKLIGDDEHGWDNEGVFNYEGGCYAKVINLDKESEPDIFNAIKRDALLENVTVAADGKINFADKSVTENTRVSYPIYHIENIVKPVSKGPHAKQVIFLSADAFGVLPPVSILNPEQAQYYFLSGFTAKLAGTERGITEPTPTFSACFGAAFLSLHPTKYAEELVKKMEMTGAKAYLVNTGWNGSGKRISIKDTRGIIDAILDGSIDKAPTKVIPFFDFVVPTELPGVDPKILDPRDTYADPAQWNEKAKDLAGRFIKNFAKFTGNEAGKKLVAAGPKL</sequence>
<organism>
    <name type="scientific">Bacteroides fragilis (strain YCH46)</name>
    <dbReference type="NCBI Taxonomy" id="295405"/>
    <lineage>
        <taxon>Bacteria</taxon>
        <taxon>Pseudomonadati</taxon>
        <taxon>Bacteroidota</taxon>
        <taxon>Bacteroidia</taxon>
        <taxon>Bacteroidales</taxon>
        <taxon>Bacteroidaceae</taxon>
        <taxon>Bacteroides</taxon>
    </lineage>
</organism>
<dbReference type="EC" id="4.1.1.49" evidence="1"/>
<dbReference type="EMBL" id="AP006841">
    <property type="protein sequence ID" value="BAD51183.1"/>
    <property type="molecule type" value="Genomic_DNA"/>
</dbReference>
<dbReference type="RefSeq" id="WP_005791971.1">
    <property type="nucleotide sequence ID" value="NZ_UYXF01000006.1"/>
</dbReference>
<dbReference type="RefSeq" id="YP_101717.1">
    <property type="nucleotide sequence ID" value="NC_006347.1"/>
</dbReference>
<dbReference type="SMR" id="Q64MV4"/>
<dbReference type="STRING" id="295405.BF4446"/>
<dbReference type="GeneID" id="60367668"/>
<dbReference type="KEGG" id="bfr:BF4446"/>
<dbReference type="PATRIC" id="fig|295405.11.peg.4285"/>
<dbReference type="HOGENOM" id="CLU_018247_0_1_10"/>
<dbReference type="OrthoDB" id="9806325at2"/>
<dbReference type="UniPathway" id="UPA00138"/>
<dbReference type="Proteomes" id="UP000002197">
    <property type="component" value="Chromosome"/>
</dbReference>
<dbReference type="GO" id="GO:0005829">
    <property type="term" value="C:cytosol"/>
    <property type="evidence" value="ECO:0007669"/>
    <property type="project" value="TreeGrafter"/>
</dbReference>
<dbReference type="GO" id="GO:0005524">
    <property type="term" value="F:ATP binding"/>
    <property type="evidence" value="ECO:0007669"/>
    <property type="project" value="UniProtKB-UniRule"/>
</dbReference>
<dbReference type="GO" id="GO:0046872">
    <property type="term" value="F:metal ion binding"/>
    <property type="evidence" value="ECO:0007669"/>
    <property type="project" value="UniProtKB-KW"/>
</dbReference>
<dbReference type="GO" id="GO:0004612">
    <property type="term" value="F:phosphoenolpyruvate carboxykinase (ATP) activity"/>
    <property type="evidence" value="ECO:0007669"/>
    <property type="project" value="UniProtKB-UniRule"/>
</dbReference>
<dbReference type="GO" id="GO:0006094">
    <property type="term" value="P:gluconeogenesis"/>
    <property type="evidence" value="ECO:0007669"/>
    <property type="project" value="UniProtKB-UniRule"/>
</dbReference>
<dbReference type="CDD" id="cd00484">
    <property type="entry name" value="PEPCK_ATP"/>
    <property type="match status" value="1"/>
</dbReference>
<dbReference type="FunFam" id="2.170.8.10:FF:000001">
    <property type="entry name" value="Phosphoenolpyruvate carboxykinase (ATP)"/>
    <property type="match status" value="1"/>
</dbReference>
<dbReference type="FunFam" id="3.40.449.10:FF:000001">
    <property type="entry name" value="Phosphoenolpyruvate carboxykinase (ATP)"/>
    <property type="match status" value="1"/>
</dbReference>
<dbReference type="Gene3D" id="3.90.228.20">
    <property type="match status" value="1"/>
</dbReference>
<dbReference type="Gene3D" id="3.40.449.10">
    <property type="entry name" value="Phosphoenolpyruvate Carboxykinase, domain 1"/>
    <property type="match status" value="1"/>
</dbReference>
<dbReference type="Gene3D" id="2.170.8.10">
    <property type="entry name" value="Phosphoenolpyruvate Carboxykinase, domain 2"/>
    <property type="match status" value="1"/>
</dbReference>
<dbReference type="HAMAP" id="MF_00453">
    <property type="entry name" value="PEPCK_ATP"/>
    <property type="match status" value="1"/>
</dbReference>
<dbReference type="InterPro" id="IPR001272">
    <property type="entry name" value="PEP_carboxykinase_ATP"/>
</dbReference>
<dbReference type="InterPro" id="IPR013035">
    <property type="entry name" value="PEP_carboxykinase_C"/>
</dbReference>
<dbReference type="InterPro" id="IPR008210">
    <property type="entry name" value="PEP_carboxykinase_N"/>
</dbReference>
<dbReference type="InterPro" id="IPR015994">
    <property type="entry name" value="PEPCK_ATP_CS"/>
</dbReference>
<dbReference type="NCBIfam" id="TIGR00224">
    <property type="entry name" value="pckA"/>
    <property type="match status" value="1"/>
</dbReference>
<dbReference type="NCBIfam" id="NF006819">
    <property type="entry name" value="PRK09344.1-1"/>
    <property type="match status" value="1"/>
</dbReference>
<dbReference type="NCBIfam" id="NF006820">
    <property type="entry name" value="PRK09344.1-2"/>
    <property type="match status" value="1"/>
</dbReference>
<dbReference type="NCBIfam" id="NF006821">
    <property type="entry name" value="PRK09344.1-3"/>
    <property type="match status" value="1"/>
</dbReference>
<dbReference type="PANTHER" id="PTHR30031:SF0">
    <property type="entry name" value="PHOSPHOENOLPYRUVATE CARBOXYKINASE (ATP)"/>
    <property type="match status" value="1"/>
</dbReference>
<dbReference type="PANTHER" id="PTHR30031">
    <property type="entry name" value="PHOSPHOENOLPYRUVATE CARBOXYKINASE ATP"/>
    <property type="match status" value="1"/>
</dbReference>
<dbReference type="Pfam" id="PF01293">
    <property type="entry name" value="PEPCK_ATP"/>
    <property type="match status" value="1"/>
</dbReference>
<dbReference type="PIRSF" id="PIRSF006294">
    <property type="entry name" value="PEP_crbxkin"/>
    <property type="match status" value="1"/>
</dbReference>
<dbReference type="SUPFAM" id="SSF68923">
    <property type="entry name" value="PEP carboxykinase N-terminal domain"/>
    <property type="match status" value="1"/>
</dbReference>
<dbReference type="SUPFAM" id="SSF53795">
    <property type="entry name" value="PEP carboxykinase-like"/>
    <property type="match status" value="1"/>
</dbReference>
<dbReference type="PROSITE" id="PS00532">
    <property type="entry name" value="PEPCK_ATP"/>
    <property type="match status" value="1"/>
</dbReference>
<reference key="1">
    <citation type="journal article" date="2004" name="Proc. Natl. Acad. Sci. U.S.A.">
        <title>Genomic analysis of Bacteroides fragilis reveals extensive DNA inversions regulating cell surface adaptation.</title>
        <authorList>
            <person name="Kuwahara T."/>
            <person name="Yamashita A."/>
            <person name="Hirakawa H."/>
            <person name="Nakayama H."/>
            <person name="Toh H."/>
            <person name="Okada N."/>
            <person name="Kuhara S."/>
            <person name="Hattori M."/>
            <person name="Hayashi T."/>
            <person name="Ohnishi Y."/>
        </authorList>
    </citation>
    <scope>NUCLEOTIDE SEQUENCE [LARGE SCALE GENOMIC DNA]</scope>
    <source>
        <strain>YCH46</strain>
    </source>
</reference>
<comment type="function">
    <text evidence="1">Involved in the gluconeogenesis. Catalyzes the conversion of oxaloacetate (OAA) to phosphoenolpyruvate (PEP) through direct phosphoryl transfer between the nucleoside triphosphate and OAA.</text>
</comment>
<comment type="catalytic activity">
    <reaction evidence="1">
        <text>oxaloacetate + ATP = phosphoenolpyruvate + ADP + CO2</text>
        <dbReference type="Rhea" id="RHEA:18617"/>
        <dbReference type="ChEBI" id="CHEBI:16452"/>
        <dbReference type="ChEBI" id="CHEBI:16526"/>
        <dbReference type="ChEBI" id="CHEBI:30616"/>
        <dbReference type="ChEBI" id="CHEBI:58702"/>
        <dbReference type="ChEBI" id="CHEBI:456216"/>
        <dbReference type="EC" id="4.1.1.49"/>
    </reaction>
</comment>
<comment type="cofactor">
    <cofactor evidence="1">
        <name>Mn(2+)</name>
        <dbReference type="ChEBI" id="CHEBI:29035"/>
    </cofactor>
    <text evidence="1">Binds 1 Mn(2+) ion per subunit.</text>
</comment>
<comment type="pathway">
    <text evidence="1">Carbohydrate biosynthesis; gluconeogenesis.</text>
</comment>
<comment type="subcellular location">
    <subcellularLocation>
        <location evidence="1">Cytoplasm</location>
    </subcellularLocation>
</comment>
<comment type="similarity">
    <text evidence="1">Belongs to the phosphoenolpyruvate carboxykinase (ATP) family.</text>
</comment>
<evidence type="ECO:0000255" key="1">
    <source>
        <dbReference type="HAMAP-Rule" id="MF_00453"/>
    </source>
</evidence>
<gene>
    <name evidence="1" type="primary">pckA</name>
    <name type="ordered locus">BF4446</name>
</gene>
<name>PCKA_BACFR</name>